<name>END8_PECAS</name>
<accession>Q6D7H0</accession>
<dbReference type="EC" id="3.2.2.-" evidence="1"/>
<dbReference type="EC" id="4.2.99.18" evidence="1"/>
<dbReference type="EMBL" id="BX950851">
    <property type="protein sequence ID" value="CAG74265.1"/>
    <property type="molecule type" value="Genomic_DNA"/>
</dbReference>
<dbReference type="RefSeq" id="WP_011092940.1">
    <property type="nucleotide sequence ID" value="NC_004547.2"/>
</dbReference>
<dbReference type="SMR" id="Q6D7H0"/>
<dbReference type="STRING" id="218491.ECA1355"/>
<dbReference type="KEGG" id="eca:ECA1355"/>
<dbReference type="PATRIC" id="fig|218491.5.peg.1386"/>
<dbReference type="eggNOG" id="COG0266">
    <property type="taxonomic scope" value="Bacteria"/>
</dbReference>
<dbReference type="HOGENOM" id="CLU_038423_2_2_6"/>
<dbReference type="OrthoDB" id="5657047at2"/>
<dbReference type="Proteomes" id="UP000007966">
    <property type="component" value="Chromosome"/>
</dbReference>
<dbReference type="GO" id="GO:0140078">
    <property type="term" value="F:class I DNA-(apurinic or apyrimidinic site) endonuclease activity"/>
    <property type="evidence" value="ECO:0007669"/>
    <property type="project" value="UniProtKB-EC"/>
</dbReference>
<dbReference type="GO" id="GO:0003684">
    <property type="term" value="F:damaged DNA binding"/>
    <property type="evidence" value="ECO:0007669"/>
    <property type="project" value="InterPro"/>
</dbReference>
<dbReference type="GO" id="GO:0000703">
    <property type="term" value="F:oxidized pyrimidine nucleobase lesion DNA N-glycosylase activity"/>
    <property type="evidence" value="ECO:0007669"/>
    <property type="project" value="UniProtKB-UniRule"/>
</dbReference>
<dbReference type="GO" id="GO:0008270">
    <property type="term" value="F:zinc ion binding"/>
    <property type="evidence" value="ECO:0007669"/>
    <property type="project" value="UniProtKB-UniRule"/>
</dbReference>
<dbReference type="GO" id="GO:0006284">
    <property type="term" value="P:base-excision repair"/>
    <property type="evidence" value="ECO:0007669"/>
    <property type="project" value="InterPro"/>
</dbReference>
<dbReference type="FunFam" id="1.10.8.50:FF:000005">
    <property type="entry name" value="Endonuclease 8"/>
    <property type="match status" value="1"/>
</dbReference>
<dbReference type="FunFam" id="3.20.190.10:FF:000002">
    <property type="entry name" value="Endonuclease 8"/>
    <property type="match status" value="1"/>
</dbReference>
<dbReference type="Gene3D" id="1.10.8.50">
    <property type="match status" value="1"/>
</dbReference>
<dbReference type="Gene3D" id="3.20.190.10">
    <property type="entry name" value="MutM-like, N-terminal"/>
    <property type="match status" value="1"/>
</dbReference>
<dbReference type="HAMAP" id="MF_01253">
    <property type="entry name" value="Endonuclease_8"/>
    <property type="match status" value="1"/>
</dbReference>
<dbReference type="InterPro" id="IPR015886">
    <property type="entry name" value="DNA_glyclase/AP_lyase_DNA-bd"/>
</dbReference>
<dbReference type="InterPro" id="IPR015887">
    <property type="entry name" value="DNA_glyclase_Znf_dom_DNA_BS"/>
</dbReference>
<dbReference type="InterPro" id="IPR023713">
    <property type="entry name" value="Endonuclease-VIII"/>
</dbReference>
<dbReference type="InterPro" id="IPR012319">
    <property type="entry name" value="FPG_cat"/>
</dbReference>
<dbReference type="InterPro" id="IPR035937">
    <property type="entry name" value="MutM-like_N-ter"/>
</dbReference>
<dbReference type="InterPro" id="IPR010979">
    <property type="entry name" value="Ribosomal_uS13-like_H2TH"/>
</dbReference>
<dbReference type="InterPro" id="IPR000214">
    <property type="entry name" value="Znf_DNA_glyclase/AP_lyase"/>
</dbReference>
<dbReference type="InterPro" id="IPR010663">
    <property type="entry name" value="Znf_FPG/IleRS"/>
</dbReference>
<dbReference type="NCBIfam" id="NF007763">
    <property type="entry name" value="PRK10445.1"/>
    <property type="match status" value="1"/>
</dbReference>
<dbReference type="PANTHER" id="PTHR42697">
    <property type="entry name" value="ENDONUCLEASE 8"/>
    <property type="match status" value="1"/>
</dbReference>
<dbReference type="PANTHER" id="PTHR42697:SF1">
    <property type="entry name" value="ENDONUCLEASE 8"/>
    <property type="match status" value="1"/>
</dbReference>
<dbReference type="Pfam" id="PF01149">
    <property type="entry name" value="Fapy_DNA_glyco"/>
    <property type="match status" value="1"/>
</dbReference>
<dbReference type="Pfam" id="PF06831">
    <property type="entry name" value="H2TH"/>
    <property type="match status" value="1"/>
</dbReference>
<dbReference type="Pfam" id="PF06827">
    <property type="entry name" value="zf-FPG_IleRS"/>
    <property type="match status" value="1"/>
</dbReference>
<dbReference type="SMART" id="SM00898">
    <property type="entry name" value="Fapy_DNA_glyco"/>
    <property type="match status" value="1"/>
</dbReference>
<dbReference type="SMART" id="SM01232">
    <property type="entry name" value="H2TH"/>
    <property type="match status" value="1"/>
</dbReference>
<dbReference type="SUPFAM" id="SSF57716">
    <property type="entry name" value="Glucocorticoid receptor-like (DNA-binding domain)"/>
    <property type="match status" value="1"/>
</dbReference>
<dbReference type="SUPFAM" id="SSF81624">
    <property type="entry name" value="N-terminal domain of MutM-like DNA repair proteins"/>
    <property type="match status" value="1"/>
</dbReference>
<dbReference type="SUPFAM" id="SSF46946">
    <property type="entry name" value="S13-like H2TH domain"/>
    <property type="match status" value="1"/>
</dbReference>
<dbReference type="PROSITE" id="PS51068">
    <property type="entry name" value="FPG_CAT"/>
    <property type="match status" value="1"/>
</dbReference>
<dbReference type="PROSITE" id="PS01242">
    <property type="entry name" value="ZF_FPG_1"/>
    <property type="match status" value="1"/>
</dbReference>
<dbReference type="PROSITE" id="PS51066">
    <property type="entry name" value="ZF_FPG_2"/>
    <property type="match status" value="1"/>
</dbReference>
<protein>
    <recommendedName>
        <fullName evidence="1">Endonuclease 8</fullName>
    </recommendedName>
    <alternativeName>
        <fullName evidence="1">DNA glycosylase/AP lyase Nei</fullName>
        <ecNumber evidence="1">3.2.2.-</ecNumber>
        <ecNumber evidence="1">4.2.99.18</ecNumber>
    </alternativeName>
    <alternativeName>
        <fullName evidence="1">DNA-(apurinic or apyrimidinic site) lyase Nei</fullName>
    </alternativeName>
    <alternativeName>
        <fullName evidence="1">Endonuclease VIII</fullName>
    </alternativeName>
</protein>
<keyword id="KW-0227">DNA damage</keyword>
<keyword id="KW-0234">DNA repair</keyword>
<keyword id="KW-0238">DNA-binding</keyword>
<keyword id="KW-0326">Glycosidase</keyword>
<keyword id="KW-0378">Hydrolase</keyword>
<keyword id="KW-0456">Lyase</keyword>
<keyword id="KW-0479">Metal-binding</keyword>
<keyword id="KW-0511">Multifunctional enzyme</keyword>
<keyword id="KW-1185">Reference proteome</keyword>
<keyword id="KW-0862">Zinc</keyword>
<keyword id="KW-0863">Zinc-finger</keyword>
<gene>
    <name evidence="1" type="primary">nei</name>
    <name type="ordered locus">ECA1355</name>
</gene>
<feature type="initiator methionine" description="Removed" evidence="1">
    <location>
        <position position="1"/>
    </location>
</feature>
<feature type="chain" id="PRO_0000170896" description="Endonuclease 8">
    <location>
        <begin position="2"/>
        <end position="263"/>
    </location>
</feature>
<feature type="zinc finger region" description="FPG-type" evidence="1">
    <location>
        <begin position="229"/>
        <end position="263"/>
    </location>
</feature>
<feature type="active site" description="Schiff-base intermediate with DNA" evidence="1">
    <location>
        <position position="2"/>
    </location>
</feature>
<feature type="active site" description="Proton donor" evidence="1">
    <location>
        <position position="3"/>
    </location>
</feature>
<feature type="active site" description="Proton donor; for beta-elimination activity" evidence="1">
    <location>
        <position position="53"/>
    </location>
</feature>
<feature type="active site" description="Proton donor; for delta-elimination activity" evidence="1">
    <location>
        <position position="253"/>
    </location>
</feature>
<feature type="binding site" evidence="1">
    <location>
        <position position="70"/>
    </location>
    <ligand>
        <name>DNA</name>
        <dbReference type="ChEBI" id="CHEBI:16991"/>
    </ligand>
</feature>
<feature type="binding site" evidence="1">
    <location>
        <position position="125"/>
    </location>
    <ligand>
        <name>DNA</name>
        <dbReference type="ChEBI" id="CHEBI:16991"/>
    </ligand>
</feature>
<feature type="binding site" evidence="1">
    <location>
        <position position="169"/>
    </location>
    <ligand>
        <name>DNA</name>
        <dbReference type="ChEBI" id="CHEBI:16991"/>
    </ligand>
</feature>
<proteinExistence type="inferred from homology"/>
<evidence type="ECO:0000255" key="1">
    <source>
        <dbReference type="HAMAP-Rule" id="MF_01253"/>
    </source>
</evidence>
<organism>
    <name type="scientific">Pectobacterium atrosepticum (strain SCRI 1043 / ATCC BAA-672)</name>
    <name type="common">Erwinia carotovora subsp. atroseptica</name>
    <dbReference type="NCBI Taxonomy" id="218491"/>
    <lineage>
        <taxon>Bacteria</taxon>
        <taxon>Pseudomonadati</taxon>
        <taxon>Pseudomonadota</taxon>
        <taxon>Gammaproteobacteria</taxon>
        <taxon>Enterobacterales</taxon>
        <taxon>Pectobacteriaceae</taxon>
        <taxon>Pectobacterium</taxon>
    </lineage>
</organism>
<comment type="function">
    <text evidence="1">Involved in base excision repair of DNA damaged by oxidation or by mutagenic agents. Acts as a DNA glycosylase that recognizes and removes damaged bases. Has a preference for oxidized pyrimidines, such as thymine glycol, 5,6-dihydrouracil and 5,6-dihydrothymine. Has AP (apurinic/apyrimidinic) lyase activity and introduces nicks in the DNA strand. Cleaves the DNA backbone by beta-delta elimination to generate a single-strand break at the site of the removed base with both 3'- and 5'-phosphates.</text>
</comment>
<comment type="catalytic activity">
    <reaction evidence="1">
        <text>2'-deoxyribonucleotide-(2'-deoxyribose 5'-phosphate)-2'-deoxyribonucleotide-DNA = a 3'-end 2'-deoxyribonucleotide-(2,3-dehydro-2,3-deoxyribose 5'-phosphate)-DNA + a 5'-end 5'-phospho-2'-deoxyribonucleoside-DNA + H(+)</text>
        <dbReference type="Rhea" id="RHEA:66592"/>
        <dbReference type="Rhea" id="RHEA-COMP:13180"/>
        <dbReference type="Rhea" id="RHEA-COMP:16897"/>
        <dbReference type="Rhea" id="RHEA-COMP:17067"/>
        <dbReference type="ChEBI" id="CHEBI:15378"/>
        <dbReference type="ChEBI" id="CHEBI:136412"/>
        <dbReference type="ChEBI" id="CHEBI:157695"/>
        <dbReference type="ChEBI" id="CHEBI:167181"/>
        <dbReference type="EC" id="4.2.99.18"/>
    </reaction>
</comment>
<comment type="cofactor">
    <cofactor evidence="1">
        <name>Zn(2+)</name>
        <dbReference type="ChEBI" id="CHEBI:29105"/>
    </cofactor>
    <text evidence="1">Binds 1 zinc ion per subunit.</text>
</comment>
<comment type="similarity">
    <text evidence="1">Belongs to the FPG family.</text>
</comment>
<sequence length="263" mass="30336">MPEGPEIRRAADKLVEAVVGKTLTRVWFAFPELKPYETELVGQQVRQIETRGKALLTYFSHDRVLYSHNQLYGVWRVVNAGESPETKRDLRIRLETQDRAILLYSASDIEMLTLDTLTAHPFLQRIGPDVLDLSLTPEQVCERLLLPRFRRRQFSGLLLDQAFLAGLGNYLRVEILWQAQLAPQHTASQLNEEQLQTLSRALLEIPRLSYNTRGTVDENRHHGAIFSFKVFHREGESCERCGGTIERTMLSSRPFYWCPHCQS</sequence>
<reference key="1">
    <citation type="journal article" date="2004" name="Proc. Natl. Acad. Sci. U.S.A.">
        <title>Genome sequence of the enterobacterial phytopathogen Erwinia carotovora subsp. atroseptica and characterization of virulence factors.</title>
        <authorList>
            <person name="Bell K.S."/>
            <person name="Sebaihia M."/>
            <person name="Pritchard L."/>
            <person name="Holden M.T.G."/>
            <person name="Hyman L.J."/>
            <person name="Holeva M.C."/>
            <person name="Thomson N.R."/>
            <person name="Bentley S.D."/>
            <person name="Churcher L.J.C."/>
            <person name="Mungall K."/>
            <person name="Atkin R."/>
            <person name="Bason N."/>
            <person name="Brooks K."/>
            <person name="Chillingworth T."/>
            <person name="Clark K."/>
            <person name="Doggett J."/>
            <person name="Fraser A."/>
            <person name="Hance Z."/>
            <person name="Hauser H."/>
            <person name="Jagels K."/>
            <person name="Moule S."/>
            <person name="Norbertczak H."/>
            <person name="Ormond D."/>
            <person name="Price C."/>
            <person name="Quail M.A."/>
            <person name="Sanders M."/>
            <person name="Walker D."/>
            <person name="Whitehead S."/>
            <person name="Salmond G.P.C."/>
            <person name="Birch P.R.J."/>
            <person name="Parkhill J."/>
            <person name="Toth I.K."/>
        </authorList>
    </citation>
    <scope>NUCLEOTIDE SEQUENCE [LARGE SCALE GENOMIC DNA]</scope>
    <source>
        <strain>SCRI 1043 / ATCC BAA-672</strain>
    </source>
</reference>